<keyword id="KW-0472">Membrane</keyword>
<keyword id="KW-0496">Mitochondrion</keyword>
<keyword id="KW-0999">Mitochondrion inner membrane</keyword>
<keyword id="KW-1185">Reference proteome</keyword>
<keyword id="KW-0677">Repeat</keyword>
<keyword id="KW-0812">Transmembrane</keyword>
<keyword id="KW-1133">Transmembrane helix</keyword>
<keyword id="KW-0813">Transport</keyword>
<gene>
    <name type="ORF">SPCC1682.09c</name>
</gene>
<comment type="subcellular location">
    <subcellularLocation>
        <location evidence="2">Mitochondrion inner membrane</location>
        <topology evidence="2">Multi-pass membrane protein</topology>
    </subcellularLocation>
</comment>
<comment type="similarity">
    <text evidence="3">Belongs to the mitochondrial carrier (TC 2.A.29) family.</text>
</comment>
<dbReference type="EMBL" id="CU329672">
    <property type="protein sequence ID" value="CAA20675.1"/>
    <property type="molecule type" value="Genomic_DNA"/>
</dbReference>
<dbReference type="PIR" id="T41066">
    <property type="entry name" value="T41066"/>
</dbReference>
<dbReference type="SMR" id="O74439"/>
<dbReference type="BioGRID" id="275297">
    <property type="interactions" value="2"/>
</dbReference>
<dbReference type="FunCoup" id="O74439">
    <property type="interactions" value="254"/>
</dbReference>
<dbReference type="STRING" id="284812.O74439"/>
<dbReference type="iPTMnet" id="O74439"/>
<dbReference type="PaxDb" id="4896-SPCC1682.09c.1"/>
<dbReference type="EnsemblFungi" id="SPCC1682.09c.1">
    <property type="protein sequence ID" value="SPCC1682.09c.1:pep"/>
    <property type="gene ID" value="SPCC1682.09c"/>
</dbReference>
<dbReference type="KEGG" id="spo:2538713"/>
<dbReference type="PomBase" id="SPCC1682.09c"/>
<dbReference type="VEuPathDB" id="FungiDB:SPCC1682.09c"/>
<dbReference type="eggNOG" id="KOG0750">
    <property type="taxonomic scope" value="Eukaryota"/>
</dbReference>
<dbReference type="HOGENOM" id="CLU_053371_0_0_1"/>
<dbReference type="InParanoid" id="O74439"/>
<dbReference type="OMA" id="GQPWFSD"/>
<dbReference type="PhylomeDB" id="O74439"/>
<dbReference type="PRO" id="PR:O74439"/>
<dbReference type="Proteomes" id="UP000002485">
    <property type="component" value="Chromosome III"/>
</dbReference>
<dbReference type="GO" id="GO:0005743">
    <property type="term" value="C:mitochondrial inner membrane"/>
    <property type="evidence" value="ECO:0000250"/>
    <property type="project" value="PomBase"/>
</dbReference>
<dbReference type="GO" id="GO:0005739">
    <property type="term" value="C:mitochondrion"/>
    <property type="evidence" value="ECO:0007005"/>
    <property type="project" value="PomBase"/>
</dbReference>
<dbReference type="GO" id="GO:0001409">
    <property type="term" value="F:guanine nucleotide transmembrane transporter activity"/>
    <property type="evidence" value="ECO:0000318"/>
    <property type="project" value="GO_Central"/>
</dbReference>
<dbReference type="GO" id="GO:0140140">
    <property type="term" value="P:mitochondrial guanine nucleotide transmembrane transport"/>
    <property type="evidence" value="ECO:0000250"/>
    <property type="project" value="PomBase"/>
</dbReference>
<dbReference type="FunFam" id="1.50.40.10:FF:000010">
    <property type="entry name" value="Probable YHM1 (Mitochondrial carrier)"/>
    <property type="match status" value="1"/>
</dbReference>
<dbReference type="Gene3D" id="1.50.40.10">
    <property type="entry name" value="Mitochondrial carrier domain"/>
    <property type="match status" value="1"/>
</dbReference>
<dbReference type="InterPro" id="IPR053042">
    <property type="entry name" value="Mito_GTP/GDP_Carrier"/>
</dbReference>
<dbReference type="InterPro" id="IPR018108">
    <property type="entry name" value="Mitochondrial_sb/sol_carrier"/>
</dbReference>
<dbReference type="InterPro" id="IPR023395">
    <property type="entry name" value="Mt_carrier_dom_sf"/>
</dbReference>
<dbReference type="PANTHER" id="PTHR46974">
    <property type="entry name" value="MITOCHONDRIAL GTP/GDP CARRIER PROTEIN 1"/>
    <property type="match status" value="1"/>
</dbReference>
<dbReference type="PANTHER" id="PTHR46974:SF1">
    <property type="entry name" value="MITOCHONDRIAL GTP_GDP CARRIER PROTEIN 1"/>
    <property type="match status" value="1"/>
</dbReference>
<dbReference type="Pfam" id="PF00153">
    <property type="entry name" value="Mito_carr"/>
    <property type="match status" value="2"/>
</dbReference>
<dbReference type="SUPFAM" id="SSF103506">
    <property type="entry name" value="Mitochondrial carrier"/>
    <property type="match status" value="1"/>
</dbReference>
<dbReference type="PROSITE" id="PS50920">
    <property type="entry name" value="SOLCAR"/>
    <property type="match status" value="3"/>
</dbReference>
<accession>O74439</accession>
<evidence type="ECO:0000255" key="1"/>
<evidence type="ECO:0000269" key="2">
    <source>
    </source>
</evidence>
<evidence type="ECO:0000305" key="3"/>
<proteinExistence type="inferred from homology"/>
<protein>
    <recommendedName>
        <fullName>Uncharacterized mitochondrial carrier C1682.09c</fullName>
    </recommendedName>
</protein>
<sequence length="300" mass="33048">MAPVQLKNKESQTARIVGSASAGILELSLFHPVDTISKRLMSNHGKITSLTQLNTVIFRDAASAPLLQKATSLFPGLGYAACYKIVQRIYKYSGQPIVKDFLNENYRHTFDKTFGKGSGKAIMHATAGSIVGIGEIFLLPLDVLKIKRQTNPAAFKGRGVFRILADEKFALYRGWGWTAARNAPGSFALFGGNAFAKEYIFKLKDYSQATFFQNFFTSIAGASASLIVSAPLDVIKTRIQNKNFDNPQSGFTILKNMLKFEGPTSFFKGLTPKLLTTGPKLVFSFTMAQTLIPFFDKLLK</sequence>
<feature type="chain" id="PRO_0000310800" description="Uncharacterized mitochondrial carrier C1682.09c">
    <location>
        <begin position="1"/>
        <end position="300"/>
    </location>
</feature>
<feature type="transmembrane region" description="Helical; Name=1" evidence="1">
    <location>
        <begin position="16"/>
        <end position="36"/>
    </location>
</feature>
<feature type="transmembrane region" description="Helical; Name=2" evidence="1">
    <location>
        <begin position="70"/>
        <end position="86"/>
    </location>
</feature>
<feature type="transmembrane region" description="Helical; Name=3" evidence="1">
    <location>
        <begin position="121"/>
        <end position="141"/>
    </location>
</feature>
<feature type="transmembrane region" description="Helical; Name=4" evidence="1">
    <location>
        <begin position="178"/>
        <end position="198"/>
    </location>
</feature>
<feature type="transmembrane region" description="Helical; Name=5" evidence="1">
    <location>
        <begin position="215"/>
        <end position="235"/>
    </location>
</feature>
<feature type="transmembrane region" description="Helical; Name=6" evidence="1">
    <location>
        <begin position="275"/>
        <end position="295"/>
    </location>
</feature>
<feature type="repeat" description="Solcar 1">
    <location>
        <begin position="10"/>
        <end position="101"/>
    </location>
</feature>
<feature type="repeat" description="Solcar 2">
    <location>
        <begin position="119"/>
        <end position="199"/>
    </location>
</feature>
<feature type="repeat" description="Solcar 3">
    <location>
        <begin position="212"/>
        <end position="294"/>
    </location>
</feature>
<reference key="1">
    <citation type="journal article" date="2002" name="Nature">
        <title>The genome sequence of Schizosaccharomyces pombe.</title>
        <authorList>
            <person name="Wood V."/>
            <person name="Gwilliam R."/>
            <person name="Rajandream M.A."/>
            <person name="Lyne M.H."/>
            <person name="Lyne R."/>
            <person name="Stewart A."/>
            <person name="Sgouros J.G."/>
            <person name="Peat N."/>
            <person name="Hayles J."/>
            <person name="Baker S.G."/>
            <person name="Basham D."/>
            <person name="Bowman S."/>
            <person name="Brooks K."/>
            <person name="Brown D."/>
            <person name="Brown S."/>
            <person name="Chillingworth T."/>
            <person name="Churcher C.M."/>
            <person name="Collins M."/>
            <person name="Connor R."/>
            <person name="Cronin A."/>
            <person name="Davis P."/>
            <person name="Feltwell T."/>
            <person name="Fraser A."/>
            <person name="Gentles S."/>
            <person name="Goble A."/>
            <person name="Hamlin N."/>
            <person name="Harris D.E."/>
            <person name="Hidalgo J."/>
            <person name="Hodgson G."/>
            <person name="Holroyd S."/>
            <person name="Hornsby T."/>
            <person name="Howarth S."/>
            <person name="Huckle E.J."/>
            <person name="Hunt S."/>
            <person name="Jagels K."/>
            <person name="James K.D."/>
            <person name="Jones L."/>
            <person name="Jones M."/>
            <person name="Leather S."/>
            <person name="McDonald S."/>
            <person name="McLean J."/>
            <person name="Mooney P."/>
            <person name="Moule S."/>
            <person name="Mungall K.L."/>
            <person name="Murphy L.D."/>
            <person name="Niblett D."/>
            <person name="Odell C."/>
            <person name="Oliver K."/>
            <person name="O'Neil S."/>
            <person name="Pearson D."/>
            <person name="Quail M.A."/>
            <person name="Rabbinowitsch E."/>
            <person name="Rutherford K.M."/>
            <person name="Rutter S."/>
            <person name="Saunders D."/>
            <person name="Seeger K."/>
            <person name="Sharp S."/>
            <person name="Skelton J."/>
            <person name="Simmonds M.N."/>
            <person name="Squares R."/>
            <person name="Squares S."/>
            <person name="Stevens K."/>
            <person name="Taylor K."/>
            <person name="Taylor R.G."/>
            <person name="Tivey A."/>
            <person name="Walsh S.V."/>
            <person name="Warren T."/>
            <person name="Whitehead S."/>
            <person name="Woodward J.R."/>
            <person name="Volckaert G."/>
            <person name="Aert R."/>
            <person name="Robben J."/>
            <person name="Grymonprez B."/>
            <person name="Weltjens I."/>
            <person name="Vanstreels E."/>
            <person name="Rieger M."/>
            <person name="Schaefer M."/>
            <person name="Mueller-Auer S."/>
            <person name="Gabel C."/>
            <person name="Fuchs M."/>
            <person name="Duesterhoeft A."/>
            <person name="Fritzc C."/>
            <person name="Holzer E."/>
            <person name="Moestl D."/>
            <person name="Hilbert H."/>
            <person name="Borzym K."/>
            <person name="Langer I."/>
            <person name="Beck A."/>
            <person name="Lehrach H."/>
            <person name="Reinhardt R."/>
            <person name="Pohl T.M."/>
            <person name="Eger P."/>
            <person name="Zimmermann W."/>
            <person name="Wedler H."/>
            <person name="Wambutt R."/>
            <person name="Purnelle B."/>
            <person name="Goffeau A."/>
            <person name="Cadieu E."/>
            <person name="Dreano S."/>
            <person name="Gloux S."/>
            <person name="Lelaure V."/>
            <person name="Mottier S."/>
            <person name="Galibert F."/>
            <person name="Aves S.J."/>
            <person name="Xiang Z."/>
            <person name="Hunt C."/>
            <person name="Moore K."/>
            <person name="Hurst S.M."/>
            <person name="Lucas M."/>
            <person name="Rochet M."/>
            <person name="Gaillardin C."/>
            <person name="Tallada V.A."/>
            <person name="Garzon A."/>
            <person name="Thode G."/>
            <person name="Daga R.R."/>
            <person name="Cruzado L."/>
            <person name="Jimenez J."/>
            <person name="Sanchez M."/>
            <person name="del Rey F."/>
            <person name="Benito J."/>
            <person name="Dominguez A."/>
            <person name="Revuelta J.L."/>
            <person name="Moreno S."/>
            <person name="Armstrong J."/>
            <person name="Forsburg S.L."/>
            <person name="Cerutti L."/>
            <person name="Lowe T."/>
            <person name="McCombie W.R."/>
            <person name="Paulsen I."/>
            <person name="Potashkin J."/>
            <person name="Shpakovski G.V."/>
            <person name="Ussery D."/>
            <person name="Barrell B.G."/>
            <person name="Nurse P."/>
        </authorList>
    </citation>
    <scope>NUCLEOTIDE SEQUENCE [LARGE SCALE GENOMIC DNA]</scope>
    <source>
        <strain>972 / ATCC 24843</strain>
    </source>
</reference>
<reference key="2">
    <citation type="journal article" date="2006" name="Nat. Biotechnol.">
        <title>ORFeome cloning and global analysis of protein localization in the fission yeast Schizosaccharomyces pombe.</title>
        <authorList>
            <person name="Matsuyama A."/>
            <person name="Arai R."/>
            <person name="Yashiroda Y."/>
            <person name="Shirai A."/>
            <person name="Kamata A."/>
            <person name="Sekido S."/>
            <person name="Kobayashi Y."/>
            <person name="Hashimoto A."/>
            <person name="Hamamoto M."/>
            <person name="Hiraoka Y."/>
            <person name="Horinouchi S."/>
            <person name="Yoshida M."/>
        </authorList>
    </citation>
    <scope>SUBCELLULAR LOCATION [LARGE SCALE ANALYSIS]</scope>
</reference>
<organism>
    <name type="scientific">Schizosaccharomyces pombe (strain 972 / ATCC 24843)</name>
    <name type="common">Fission yeast</name>
    <dbReference type="NCBI Taxonomy" id="284812"/>
    <lineage>
        <taxon>Eukaryota</taxon>
        <taxon>Fungi</taxon>
        <taxon>Dikarya</taxon>
        <taxon>Ascomycota</taxon>
        <taxon>Taphrinomycotina</taxon>
        <taxon>Schizosaccharomycetes</taxon>
        <taxon>Schizosaccharomycetales</taxon>
        <taxon>Schizosaccharomycetaceae</taxon>
        <taxon>Schizosaccharomyces</taxon>
    </lineage>
</organism>
<name>YJE9_SCHPO</name>